<name>FOLD_KOSOT</name>
<dbReference type="EC" id="1.5.1.5" evidence="1"/>
<dbReference type="EC" id="3.5.4.9" evidence="1"/>
<dbReference type="EMBL" id="CP001634">
    <property type="protein sequence ID" value="ACR80790.1"/>
    <property type="molecule type" value="Genomic_DNA"/>
</dbReference>
<dbReference type="RefSeq" id="WP_015869431.1">
    <property type="nucleotide sequence ID" value="NC_012785.1"/>
</dbReference>
<dbReference type="SMR" id="C5CI88"/>
<dbReference type="STRING" id="521045.Kole_2113"/>
<dbReference type="KEGG" id="kol:Kole_2113"/>
<dbReference type="eggNOG" id="COG0190">
    <property type="taxonomic scope" value="Bacteria"/>
</dbReference>
<dbReference type="HOGENOM" id="CLU_034045_2_1_0"/>
<dbReference type="OrthoDB" id="9803580at2"/>
<dbReference type="UniPathway" id="UPA00193"/>
<dbReference type="Proteomes" id="UP000002382">
    <property type="component" value="Chromosome"/>
</dbReference>
<dbReference type="GO" id="GO:0005829">
    <property type="term" value="C:cytosol"/>
    <property type="evidence" value="ECO:0007669"/>
    <property type="project" value="TreeGrafter"/>
</dbReference>
<dbReference type="GO" id="GO:0004477">
    <property type="term" value="F:methenyltetrahydrofolate cyclohydrolase activity"/>
    <property type="evidence" value="ECO:0007669"/>
    <property type="project" value="UniProtKB-UniRule"/>
</dbReference>
<dbReference type="GO" id="GO:0004488">
    <property type="term" value="F:methylenetetrahydrofolate dehydrogenase (NADP+) activity"/>
    <property type="evidence" value="ECO:0007669"/>
    <property type="project" value="UniProtKB-UniRule"/>
</dbReference>
<dbReference type="GO" id="GO:0000105">
    <property type="term" value="P:L-histidine biosynthetic process"/>
    <property type="evidence" value="ECO:0007669"/>
    <property type="project" value="UniProtKB-KW"/>
</dbReference>
<dbReference type="GO" id="GO:0009086">
    <property type="term" value="P:methionine biosynthetic process"/>
    <property type="evidence" value="ECO:0007669"/>
    <property type="project" value="UniProtKB-KW"/>
</dbReference>
<dbReference type="GO" id="GO:0006164">
    <property type="term" value="P:purine nucleotide biosynthetic process"/>
    <property type="evidence" value="ECO:0007669"/>
    <property type="project" value="UniProtKB-KW"/>
</dbReference>
<dbReference type="GO" id="GO:0035999">
    <property type="term" value="P:tetrahydrofolate interconversion"/>
    <property type="evidence" value="ECO:0007669"/>
    <property type="project" value="UniProtKB-UniRule"/>
</dbReference>
<dbReference type="CDD" id="cd01080">
    <property type="entry name" value="NAD_bind_m-THF_DH_Cyclohyd"/>
    <property type="match status" value="1"/>
</dbReference>
<dbReference type="FunFam" id="3.40.50.720:FF:000094">
    <property type="entry name" value="Bifunctional protein FolD"/>
    <property type="match status" value="1"/>
</dbReference>
<dbReference type="Gene3D" id="3.40.50.10860">
    <property type="entry name" value="Leucine Dehydrogenase, chain A, domain 1"/>
    <property type="match status" value="1"/>
</dbReference>
<dbReference type="Gene3D" id="3.40.50.720">
    <property type="entry name" value="NAD(P)-binding Rossmann-like Domain"/>
    <property type="match status" value="1"/>
</dbReference>
<dbReference type="HAMAP" id="MF_01576">
    <property type="entry name" value="THF_DHG_CYH"/>
    <property type="match status" value="1"/>
</dbReference>
<dbReference type="InterPro" id="IPR046346">
    <property type="entry name" value="Aminoacid_DH-like_N_sf"/>
</dbReference>
<dbReference type="InterPro" id="IPR036291">
    <property type="entry name" value="NAD(P)-bd_dom_sf"/>
</dbReference>
<dbReference type="InterPro" id="IPR000672">
    <property type="entry name" value="THF_DH/CycHdrlase"/>
</dbReference>
<dbReference type="InterPro" id="IPR020630">
    <property type="entry name" value="THF_DH/CycHdrlase_cat_dom"/>
</dbReference>
<dbReference type="InterPro" id="IPR020631">
    <property type="entry name" value="THF_DH/CycHdrlase_NAD-bd_dom"/>
</dbReference>
<dbReference type="PANTHER" id="PTHR48099:SF5">
    <property type="entry name" value="C-1-TETRAHYDROFOLATE SYNTHASE, CYTOPLASMIC"/>
    <property type="match status" value="1"/>
</dbReference>
<dbReference type="PANTHER" id="PTHR48099">
    <property type="entry name" value="C-1-TETRAHYDROFOLATE SYNTHASE, CYTOPLASMIC-RELATED"/>
    <property type="match status" value="1"/>
</dbReference>
<dbReference type="Pfam" id="PF00763">
    <property type="entry name" value="THF_DHG_CYH"/>
    <property type="match status" value="1"/>
</dbReference>
<dbReference type="Pfam" id="PF02882">
    <property type="entry name" value="THF_DHG_CYH_C"/>
    <property type="match status" value="1"/>
</dbReference>
<dbReference type="PRINTS" id="PR00085">
    <property type="entry name" value="THFDHDRGNASE"/>
</dbReference>
<dbReference type="SUPFAM" id="SSF53223">
    <property type="entry name" value="Aminoacid dehydrogenase-like, N-terminal domain"/>
    <property type="match status" value="1"/>
</dbReference>
<dbReference type="SUPFAM" id="SSF51735">
    <property type="entry name" value="NAD(P)-binding Rossmann-fold domains"/>
    <property type="match status" value="1"/>
</dbReference>
<evidence type="ECO:0000255" key="1">
    <source>
        <dbReference type="HAMAP-Rule" id="MF_01576"/>
    </source>
</evidence>
<comment type="function">
    <text evidence="1">Catalyzes the oxidation of 5,10-methylenetetrahydrofolate to 5,10-methenyltetrahydrofolate and then the hydrolysis of 5,10-methenyltetrahydrofolate to 10-formyltetrahydrofolate.</text>
</comment>
<comment type="catalytic activity">
    <reaction evidence="1">
        <text>(6R)-5,10-methylene-5,6,7,8-tetrahydrofolate + NADP(+) = (6R)-5,10-methenyltetrahydrofolate + NADPH</text>
        <dbReference type="Rhea" id="RHEA:22812"/>
        <dbReference type="ChEBI" id="CHEBI:15636"/>
        <dbReference type="ChEBI" id="CHEBI:57455"/>
        <dbReference type="ChEBI" id="CHEBI:57783"/>
        <dbReference type="ChEBI" id="CHEBI:58349"/>
        <dbReference type="EC" id="1.5.1.5"/>
    </reaction>
</comment>
<comment type="catalytic activity">
    <reaction evidence="1">
        <text>(6R)-5,10-methenyltetrahydrofolate + H2O = (6R)-10-formyltetrahydrofolate + H(+)</text>
        <dbReference type="Rhea" id="RHEA:23700"/>
        <dbReference type="ChEBI" id="CHEBI:15377"/>
        <dbReference type="ChEBI" id="CHEBI:15378"/>
        <dbReference type="ChEBI" id="CHEBI:57455"/>
        <dbReference type="ChEBI" id="CHEBI:195366"/>
        <dbReference type="EC" id="3.5.4.9"/>
    </reaction>
</comment>
<comment type="pathway">
    <text evidence="1">One-carbon metabolism; tetrahydrofolate interconversion.</text>
</comment>
<comment type="subunit">
    <text evidence="1">Homodimer.</text>
</comment>
<comment type="similarity">
    <text evidence="1">Belongs to the tetrahydrofolate dehydrogenase/cyclohydrolase family.</text>
</comment>
<keyword id="KW-0028">Amino-acid biosynthesis</keyword>
<keyword id="KW-0368">Histidine biosynthesis</keyword>
<keyword id="KW-0378">Hydrolase</keyword>
<keyword id="KW-0486">Methionine biosynthesis</keyword>
<keyword id="KW-0511">Multifunctional enzyme</keyword>
<keyword id="KW-0521">NADP</keyword>
<keyword id="KW-0554">One-carbon metabolism</keyword>
<keyword id="KW-0560">Oxidoreductase</keyword>
<keyword id="KW-0658">Purine biosynthesis</keyword>
<keyword id="KW-1185">Reference proteome</keyword>
<protein>
    <recommendedName>
        <fullName evidence="1">Bifunctional protein FolD</fullName>
    </recommendedName>
    <domain>
        <recommendedName>
            <fullName evidence="1">Methylenetetrahydrofolate dehydrogenase</fullName>
            <ecNumber evidence="1">1.5.1.5</ecNumber>
        </recommendedName>
    </domain>
    <domain>
        <recommendedName>
            <fullName evidence="1">Methenyltetrahydrofolate cyclohydrolase</fullName>
            <ecNumber evidence="1">3.5.4.9</ecNumber>
        </recommendedName>
    </domain>
</protein>
<gene>
    <name evidence="1" type="primary">folD</name>
    <name type="ordered locus">Kole_2113</name>
</gene>
<feature type="chain" id="PRO_1000215601" description="Bifunctional protein FolD">
    <location>
        <begin position="1"/>
        <end position="277"/>
    </location>
</feature>
<feature type="binding site" evidence="1">
    <location>
        <begin position="156"/>
        <end position="158"/>
    </location>
    <ligand>
        <name>NADP(+)</name>
        <dbReference type="ChEBI" id="CHEBI:58349"/>
    </ligand>
</feature>
<feature type="binding site" evidence="1">
    <location>
        <position position="183"/>
    </location>
    <ligand>
        <name>NADP(+)</name>
        <dbReference type="ChEBI" id="CHEBI:58349"/>
    </ligand>
</feature>
<feature type="binding site" evidence="1">
    <location>
        <position position="224"/>
    </location>
    <ligand>
        <name>NADP(+)</name>
        <dbReference type="ChEBI" id="CHEBI:58349"/>
    </ligand>
</feature>
<sequence>MGILLDGKPVAKMIYAEIKEWLGNLQEKPPKLVLFCSEPDDSTKTYMNSIVKRGGKLGISVEICHAGENPVEEIKKLNESRDVAGVMIMHPLKNVDEKLVVSALSLEKDVEGRTPGNLGGIMTGDESFAPPTAEAVMEILRFYDVSLSGKDVTIVGRSTTVGKPLSMLMLKKGIDATVTICHSRTKNLVEKIKRANVLVSAVGRAGFITKEMVGKDSIIIDVGINLYDGKIVGDVDFEQVEPEVAAITPVPGGVGIVTTAILFRHFMVSSRRMVGRR</sequence>
<organism>
    <name type="scientific">Kosmotoga olearia (strain ATCC BAA-1733 / DSM 21960 / TBF 19.5.1)</name>
    <dbReference type="NCBI Taxonomy" id="521045"/>
    <lineage>
        <taxon>Bacteria</taxon>
        <taxon>Thermotogati</taxon>
        <taxon>Thermotogota</taxon>
        <taxon>Thermotogae</taxon>
        <taxon>Kosmotogales</taxon>
        <taxon>Kosmotogaceae</taxon>
        <taxon>Kosmotoga</taxon>
    </lineage>
</organism>
<proteinExistence type="inferred from homology"/>
<reference key="1">
    <citation type="submission" date="2009-06" db="EMBL/GenBank/DDBJ databases">
        <title>Complete sequence of Thermotogales bacterium TBF 19.5.1.</title>
        <authorList>
            <consortium name="US DOE Joint Genome Institute"/>
            <person name="Lucas S."/>
            <person name="Copeland A."/>
            <person name="Lapidus A."/>
            <person name="Glavina del Rio T."/>
            <person name="Tice H."/>
            <person name="Bruce D."/>
            <person name="Goodwin L."/>
            <person name="Pitluck S."/>
            <person name="Chertkov O."/>
            <person name="Brettin T."/>
            <person name="Detter J.C."/>
            <person name="Han C."/>
            <person name="Schmutz J."/>
            <person name="Larimer F."/>
            <person name="Land M."/>
            <person name="Hauser L."/>
            <person name="Kyrpides N."/>
            <person name="Ovchinnikova G."/>
            <person name="Noll K."/>
        </authorList>
    </citation>
    <scope>NUCLEOTIDE SEQUENCE [LARGE SCALE GENOMIC DNA]</scope>
    <source>
        <strain>ATCC BAA-1733 / DSM 21960 / TBF 19.5.1</strain>
    </source>
</reference>
<accession>C5CI88</accession>